<proteinExistence type="evidence at transcript level"/>
<protein>
    <recommendedName>
        <fullName>Hyaluronidase 2</fullName>
        <shortName>TsHyal-2</shortName>
        <ecNumber>3.2.1.35</ecNumber>
    </recommendedName>
    <alternativeName>
        <fullName>Hyaluronoglucosaminidase</fullName>
    </alternativeName>
    <alternativeName>
        <fullName>Venom spreading factor</fullName>
    </alternativeName>
</protein>
<feature type="signal peptide" evidence="2">
    <location>
        <begin position="1"/>
        <end position="19"/>
    </location>
</feature>
<feature type="chain" id="PRO_0000429175" description="Hyaluronidase 2">
    <location>
        <begin position="20"/>
        <end position="403"/>
    </location>
</feature>
<feature type="domain" description="EGF-like" evidence="1">
    <location>
        <begin position="346"/>
        <end position="400"/>
    </location>
</feature>
<feature type="active site" description="Proton donor" evidence="1">
    <location>
        <position position="122"/>
    </location>
</feature>
<feature type="glycosylation site" description="N-linked (GlcNAc...) asparagine" evidence="2">
    <location>
        <position position="39"/>
    </location>
</feature>
<feature type="glycosylation site" description="N-linked (GlcNAc...) asparagine" evidence="2">
    <location>
        <position position="103"/>
    </location>
</feature>
<feature type="glycosylation site" description="N-linked (GlcNAc...) asparagine" evidence="2">
    <location>
        <position position="200"/>
    </location>
</feature>
<feature type="disulfide bond" evidence="1">
    <location>
        <begin position="32"/>
        <end position="325"/>
    </location>
</feature>
<feature type="disulfide bond" evidence="1">
    <location>
        <begin position="191"/>
        <end position="234"/>
    </location>
</feature>
<feature type="disulfide bond" evidence="1">
    <location>
        <begin position="198"/>
        <end position="212"/>
    </location>
</feature>
<feature type="disulfide bond" evidence="1">
    <location>
        <begin position="350"/>
        <end position="361"/>
    </location>
</feature>
<feature type="disulfide bond" evidence="1">
    <location>
        <begin position="355"/>
        <end position="389"/>
    </location>
</feature>
<feature type="disulfide bond" evidence="1">
    <location>
        <begin position="391"/>
        <end position="399"/>
    </location>
</feature>
<evidence type="ECO:0000250" key="1"/>
<evidence type="ECO:0000255" key="2"/>
<evidence type="ECO:0000305" key="3"/>
<accession>W0HFN9</accession>
<organism>
    <name type="scientific">Tityus serrulatus</name>
    <name type="common">Brazilian scorpion</name>
    <dbReference type="NCBI Taxonomy" id="6887"/>
    <lineage>
        <taxon>Eukaryota</taxon>
        <taxon>Metazoa</taxon>
        <taxon>Ecdysozoa</taxon>
        <taxon>Arthropoda</taxon>
        <taxon>Chelicerata</taxon>
        <taxon>Arachnida</taxon>
        <taxon>Scorpiones</taxon>
        <taxon>Buthida</taxon>
        <taxon>Buthoidea</taxon>
        <taxon>Buthidae</taxon>
        <taxon>Tityus</taxon>
    </lineage>
</organism>
<keyword id="KW-1015">Disulfide bond</keyword>
<keyword id="KW-0245">EGF-like domain</keyword>
<keyword id="KW-0325">Glycoprotein</keyword>
<keyword id="KW-0326">Glycosidase</keyword>
<keyword id="KW-0378">Hydrolase</keyword>
<keyword id="KW-0964">Secreted</keyword>
<keyword id="KW-0732">Signal</keyword>
<comment type="function">
    <text evidence="1">Hydrolyzes high molecular weight hyaluronic acid to produce small oligosaccharides (By similarity). Is an important component of the venom, since anti-hyaluronidase serum effectively neutralizes the lethal effet of the venom injected into mice. It may act by increasing the diffusion of other venom proteins by degrading the extracellular matrix.</text>
</comment>
<comment type="catalytic activity">
    <reaction>
        <text>Random hydrolysis of (1-&gt;4)-linkages between N-acetyl-beta-D-glucosamine and D-glucuronate residues in hyaluronate.</text>
        <dbReference type="EC" id="3.2.1.35"/>
    </reaction>
</comment>
<comment type="subcellular location">
    <subcellularLocation>
        <location evidence="1">Secreted</location>
    </subcellularLocation>
</comment>
<comment type="tissue specificity">
    <text>Expressed by the venom gland.</text>
</comment>
<comment type="similarity">
    <text evidence="3">Belongs to the glycosyl hydrolase 56 family.</text>
</comment>
<sequence>MNPISIFSVVISVICAVQAEFKVYWEVPSFLCSKRFNINVTQVLTSHKILVNQGESFNGDKIVMFYENQLGKYPYIDSNKVEINGGILQVADLLKHLKVAKDNITNLVPNPNFNGVGVIDWESWLPTWDFNWDKMKVYRKKSIDLVKSKHPEWPSHRVENVAKEEWEKSAKEWMVKTLKLAQELRPNAVWCYYSFPDCYNYSRKDEPSPLACIRKVLVENDRISWLWKQSTAICPSIHIQESHITKYSMSQRVWWIDARLREAVRLSMYHRNIPIYPYINYILPGTNQIVPVMDFKRTLGQIASLGLEGAILWGSSYHLFSESQCKITFDYVKNVIAPTVATVVLNTNRCSQLICKGRGNCIWPAEPFSSWKYLLDPKMPVFKPMKIICKCKHYLGRYCEIPK</sequence>
<reference key="1">
    <citation type="journal article" date="2014" name="PLoS Negl. Trop. Dis.">
        <title>Molecular, immunological, and biological characterization of Tityus serrulatus venom hyaluronidase: new insights into its role in envenomation.</title>
        <authorList>
            <person name="Horta C.C."/>
            <person name="Magalhaes B.F."/>
            <person name="Oliveira-Mendes B.B."/>
            <person name="do Carmo A.O."/>
            <person name="Duarte C.G."/>
            <person name="Felicori L.F."/>
            <person name="Machado-de-Avila R.A."/>
            <person name="Chavez-Olortegui C."/>
            <person name="Kalapothakis E."/>
        </authorList>
    </citation>
    <scope>NUCLEOTIDE SEQUENCE [MRNA]</scope>
    <scope>3D-STRUCTURE MODELING</scope>
    <source>
        <tissue>Venom gland</tissue>
    </source>
</reference>
<name>HYAL2_TITSE</name>
<dbReference type="EC" id="3.2.1.35"/>
<dbReference type="EMBL" id="KF623284">
    <property type="protein sequence ID" value="AHF72516.1"/>
    <property type="molecule type" value="mRNA"/>
</dbReference>
<dbReference type="SMR" id="W0HFN9"/>
<dbReference type="CAZy" id="GH56">
    <property type="family name" value="Glycoside Hydrolase Family 56"/>
</dbReference>
<dbReference type="BRENDA" id="3.2.1.35">
    <property type="organism ID" value="14016"/>
</dbReference>
<dbReference type="GO" id="GO:0005576">
    <property type="term" value="C:extracellular region"/>
    <property type="evidence" value="ECO:0007669"/>
    <property type="project" value="UniProtKB-SubCell"/>
</dbReference>
<dbReference type="GO" id="GO:0004415">
    <property type="term" value="F:hyalurononglucosaminidase activity"/>
    <property type="evidence" value="ECO:0007669"/>
    <property type="project" value="UniProtKB-EC"/>
</dbReference>
<dbReference type="GO" id="GO:0005975">
    <property type="term" value="P:carbohydrate metabolic process"/>
    <property type="evidence" value="ECO:0007669"/>
    <property type="project" value="InterPro"/>
</dbReference>
<dbReference type="GO" id="GO:0030214">
    <property type="term" value="P:hyaluronan catabolic process"/>
    <property type="evidence" value="ECO:0007669"/>
    <property type="project" value="TreeGrafter"/>
</dbReference>
<dbReference type="FunFam" id="3.20.20.70:FF:000065">
    <property type="entry name" value="Hyaluronidase"/>
    <property type="match status" value="1"/>
</dbReference>
<dbReference type="Gene3D" id="3.20.20.70">
    <property type="entry name" value="Aldolase class I"/>
    <property type="match status" value="1"/>
</dbReference>
<dbReference type="InterPro" id="IPR013785">
    <property type="entry name" value="Aldolase_TIM"/>
</dbReference>
<dbReference type="InterPro" id="IPR017853">
    <property type="entry name" value="Glycoside_hydrolase_SF"/>
</dbReference>
<dbReference type="InterPro" id="IPR018155">
    <property type="entry name" value="Hyaluronidase"/>
</dbReference>
<dbReference type="PANTHER" id="PTHR11769">
    <property type="entry name" value="HYALURONIDASE"/>
    <property type="match status" value="1"/>
</dbReference>
<dbReference type="PANTHER" id="PTHR11769:SF35">
    <property type="entry name" value="HYALURONIDASE"/>
    <property type="match status" value="1"/>
</dbReference>
<dbReference type="Pfam" id="PF01630">
    <property type="entry name" value="Glyco_hydro_56"/>
    <property type="match status" value="1"/>
</dbReference>
<dbReference type="PIRSF" id="PIRSF038193">
    <property type="entry name" value="Hyaluronidase"/>
    <property type="match status" value="1"/>
</dbReference>
<dbReference type="PRINTS" id="PR00846">
    <property type="entry name" value="GLHYDRLASE56"/>
</dbReference>
<dbReference type="SUPFAM" id="SSF51445">
    <property type="entry name" value="(Trans)glycosidases"/>
    <property type="match status" value="1"/>
</dbReference>